<gene>
    <name evidence="1" type="primary">entH</name>
    <name type="ordered locus">SSPA1985</name>
</gene>
<evidence type="ECO:0000255" key="1">
    <source>
        <dbReference type="HAMAP-Rule" id="MF_00907"/>
    </source>
</evidence>
<accession>B5BCV2</accession>
<keyword id="KW-0963">Cytoplasm</keyword>
<keyword id="KW-0378">Hydrolase</keyword>
<feature type="chain" id="PRO_0000413873" description="Proofreading thioesterase EntH">
    <location>
        <begin position="1"/>
        <end position="137"/>
    </location>
</feature>
<feature type="active site" description="Nucleophile or proton acceptor" evidence="1">
    <location>
        <position position="63"/>
    </location>
</feature>
<name>ENTH_SALPK</name>
<organism>
    <name type="scientific">Salmonella paratyphi A (strain AKU_12601)</name>
    <dbReference type="NCBI Taxonomy" id="554290"/>
    <lineage>
        <taxon>Bacteria</taxon>
        <taxon>Pseudomonadati</taxon>
        <taxon>Pseudomonadota</taxon>
        <taxon>Gammaproteobacteria</taxon>
        <taxon>Enterobacterales</taxon>
        <taxon>Enterobacteriaceae</taxon>
        <taxon>Salmonella</taxon>
    </lineage>
</organism>
<dbReference type="EC" id="3.1.2.-" evidence="1"/>
<dbReference type="EMBL" id="FM200053">
    <property type="protein sequence ID" value="CAR60188.1"/>
    <property type="molecule type" value="Genomic_DNA"/>
</dbReference>
<dbReference type="RefSeq" id="WP_000637964.1">
    <property type="nucleotide sequence ID" value="NC_011147.1"/>
</dbReference>
<dbReference type="SMR" id="B5BCV2"/>
<dbReference type="KEGG" id="sek:SSPA1985"/>
<dbReference type="HOGENOM" id="CLU_089876_13_1_6"/>
<dbReference type="UniPathway" id="UPA00017"/>
<dbReference type="Proteomes" id="UP000001869">
    <property type="component" value="Chromosome"/>
</dbReference>
<dbReference type="GO" id="GO:0005829">
    <property type="term" value="C:cytosol"/>
    <property type="evidence" value="ECO:0007669"/>
    <property type="project" value="TreeGrafter"/>
</dbReference>
<dbReference type="GO" id="GO:0061522">
    <property type="term" value="F:1,4-dihydroxy-2-naphthoyl-CoA thioesterase activity"/>
    <property type="evidence" value="ECO:0007669"/>
    <property type="project" value="TreeGrafter"/>
</dbReference>
<dbReference type="GO" id="GO:0009239">
    <property type="term" value="P:enterobactin biosynthetic process"/>
    <property type="evidence" value="ECO:0007669"/>
    <property type="project" value="UniProtKB-UniRule"/>
</dbReference>
<dbReference type="CDD" id="cd03443">
    <property type="entry name" value="PaaI_thioesterase"/>
    <property type="match status" value="1"/>
</dbReference>
<dbReference type="FunFam" id="3.10.129.10:FF:000002">
    <property type="entry name" value="1,4-dihydroxy-2-naphthoyl-CoA hydrolase"/>
    <property type="match status" value="1"/>
</dbReference>
<dbReference type="Gene3D" id="3.10.129.10">
    <property type="entry name" value="Hotdog Thioesterase"/>
    <property type="match status" value="1"/>
</dbReference>
<dbReference type="HAMAP" id="MF_00907">
    <property type="entry name" value="Thioesterase_EntH"/>
    <property type="match status" value="1"/>
</dbReference>
<dbReference type="InterPro" id="IPR029069">
    <property type="entry name" value="HotDog_dom_sf"/>
</dbReference>
<dbReference type="InterPro" id="IPR003736">
    <property type="entry name" value="PAAI_dom"/>
</dbReference>
<dbReference type="InterPro" id="IPR026576">
    <property type="entry name" value="Thioesterase_EntH"/>
</dbReference>
<dbReference type="InterPro" id="IPR006683">
    <property type="entry name" value="Thioestr_dom"/>
</dbReference>
<dbReference type="NCBIfam" id="NF007607">
    <property type="entry name" value="PRK10254.1"/>
    <property type="match status" value="1"/>
</dbReference>
<dbReference type="NCBIfam" id="TIGR00369">
    <property type="entry name" value="unchar_dom_1"/>
    <property type="match status" value="1"/>
</dbReference>
<dbReference type="PANTHER" id="PTHR43240">
    <property type="entry name" value="1,4-DIHYDROXY-2-NAPHTHOYL-COA THIOESTERASE 1"/>
    <property type="match status" value="1"/>
</dbReference>
<dbReference type="PANTHER" id="PTHR43240:SF9">
    <property type="entry name" value="PROOFREADING THIOESTERASE ENTH"/>
    <property type="match status" value="1"/>
</dbReference>
<dbReference type="Pfam" id="PF03061">
    <property type="entry name" value="4HBT"/>
    <property type="match status" value="1"/>
</dbReference>
<dbReference type="SUPFAM" id="SSF54637">
    <property type="entry name" value="Thioesterase/thiol ester dehydrase-isomerase"/>
    <property type="match status" value="1"/>
</dbReference>
<proteinExistence type="inferred from homology"/>
<reference key="1">
    <citation type="journal article" date="2009" name="BMC Genomics">
        <title>Pseudogene accumulation in the evolutionary histories of Salmonella enterica serovars Paratyphi A and Typhi.</title>
        <authorList>
            <person name="Holt K.E."/>
            <person name="Thomson N.R."/>
            <person name="Wain J."/>
            <person name="Langridge G.C."/>
            <person name="Hasan R."/>
            <person name="Bhutta Z.A."/>
            <person name="Quail M.A."/>
            <person name="Norbertczak H."/>
            <person name="Walker D."/>
            <person name="Simmonds M."/>
            <person name="White B."/>
            <person name="Bason N."/>
            <person name="Mungall K."/>
            <person name="Dougan G."/>
            <person name="Parkhill J."/>
        </authorList>
    </citation>
    <scope>NUCLEOTIDE SEQUENCE [LARGE SCALE GENOMIC DNA]</scope>
    <source>
        <strain>AKU_12601</strain>
    </source>
</reference>
<sequence>MIWKRHLTLDELNATSQNTLVAHLGIVYTHLGDDVLEAEMPVDARTHQPFGLLHGGASAALAETLGSMAGYLMTRDGQCVVGTELNATHHRAVSQGKVRGVCLPLHLGRQNQSWEITLFDEQGRRCCTCRLGTAVMG</sequence>
<comment type="function">
    <text evidence="1">Required for optimal enterobactin synthesis. Acts as a proofreading enzyme that prevents EntB misacylation by hydrolyzing the thioester bound existing between EntB and wrongly charged molecules.</text>
</comment>
<comment type="pathway">
    <text evidence="1">Siderophore biosynthesis; enterobactin biosynthesis.</text>
</comment>
<comment type="subunit">
    <text evidence="1">Homotetramer. Dimer of dimers. Interacts specifically with the aryl carrier protein (ArCP) domain of EntB.</text>
</comment>
<comment type="subcellular location">
    <subcellularLocation>
        <location evidence="1">Cytoplasm</location>
    </subcellularLocation>
</comment>
<comment type="similarity">
    <text evidence="1">Belongs to the thioesterase PaaI family.</text>
</comment>
<protein>
    <recommendedName>
        <fullName evidence="1">Proofreading thioesterase EntH</fullName>
        <ecNumber evidence="1">3.1.2.-</ecNumber>
    </recommendedName>
    <alternativeName>
        <fullName evidence="1">Enterobactin synthase component H</fullName>
    </alternativeName>
</protein>